<gene>
    <name type="primary">COI</name>
</gene>
<dbReference type="EC" id="7.1.1.9"/>
<dbReference type="EMBL" id="AF075402">
    <property type="protein sequence ID" value="AAD46709.1"/>
    <property type="molecule type" value="Genomic_DNA"/>
</dbReference>
<dbReference type="SMR" id="Q9TGE6"/>
<dbReference type="UniPathway" id="UPA00705"/>
<dbReference type="GO" id="GO:0005743">
    <property type="term" value="C:mitochondrial inner membrane"/>
    <property type="evidence" value="ECO:0007669"/>
    <property type="project" value="UniProtKB-SubCell"/>
</dbReference>
<dbReference type="GO" id="GO:0004129">
    <property type="term" value="F:cytochrome-c oxidase activity"/>
    <property type="evidence" value="ECO:0007669"/>
    <property type="project" value="UniProtKB-EC"/>
</dbReference>
<dbReference type="GO" id="GO:0020037">
    <property type="term" value="F:heme binding"/>
    <property type="evidence" value="ECO:0007669"/>
    <property type="project" value="InterPro"/>
</dbReference>
<dbReference type="GO" id="GO:0046872">
    <property type="term" value="F:metal ion binding"/>
    <property type="evidence" value="ECO:0007669"/>
    <property type="project" value="UniProtKB-KW"/>
</dbReference>
<dbReference type="GO" id="GO:0015990">
    <property type="term" value="P:electron transport coupled proton transport"/>
    <property type="evidence" value="ECO:0007669"/>
    <property type="project" value="TreeGrafter"/>
</dbReference>
<dbReference type="GO" id="GO:0006123">
    <property type="term" value="P:mitochondrial electron transport, cytochrome c to oxygen"/>
    <property type="evidence" value="ECO:0007669"/>
    <property type="project" value="TreeGrafter"/>
</dbReference>
<dbReference type="Gene3D" id="1.20.210.10">
    <property type="entry name" value="Cytochrome c oxidase-like, subunit I domain"/>
    <property type="match status" value="1"/>
</dbReference>
<dbReference type="InterPro" id="IPR023616">
    <property type="entry name" value="Cyt_c_oxase-like_su1_dom"/>
</dbReference>
<dbReference type="InterPro" id="IPR036927">
    <property type="entry name" value="Cyt_c_oxase-like_su1_sf"/>
</dbReference>
<dbReference type="InterPro" id="IPR000883">
    <property type="entry name" value="Cyt_C_Oxase_1"/>
</dbReference>
<dbReference type="PANTHER" id="PTHR10422">
    <property type="entry name" value="CYTOCHROME C OXIDASE SUBUNIT 1"/>
    <property type="match status" value="1"/>
</dbReference>
<dbReference type="PANTHER" id="PTHR10422:SF18">
    <property type="entry name" value="CYTOCHROME C OXIDASE SUBUNIT 1"/>
    <property type="match status" value="1"/>
</dbReference>
<dbReference type="Pfam" id="PF00115">
    <property type="entry name" value="COX1"/>
    <property type="match status" value="1"/>
</dbReference>
<dbReference type="PRINTS" id="PR01165">
    <property type="entry name" value="CYCOXIDASEI"/>
</dbReference>
<dbReference type="SUPFAM" id="SSF81442">
    <property type="entry name" value="Cytochrome c oxidase subunit I-like"/>
    <property type="match status" value="1"/>
</dbReference>
<dbReference type="PROSITE" id="PS50855">
    <property type="entry name" value="COX1"/>
    <property type="match status" value="1"/>
</dbReference>
<accession>Q9TGE6</accession>
<protein>
    <recommendedName>
        <fullName>Cytochrome c oxidase subunit 1</fullName>
        <ecNumber>7.1.1.9</ecNumber>
    </recommendedName>
    <alternativeName>
        <fullName>Cytochrome c oxidase polypeptide I</fullName>
    </alternativeName>
</protein>
<sequence length="213" mass="23084">IFGIWAGLVGTSLSLMIRTELGKPGSLLNDDQLYNVVVTAHGFIMIFFMVMPIMIGGFGNWLVPLMLGAPDMAFPRMNNMSFWLLPPSLTLLLASSAVESGAGTGWTVYPPLSSNLSHAGPSVDLAIFSLHLAGISSILGAINFITTIMNMRWEGLLMERMSLFVWSVFITAILLLLSLPVLAGAITMLLTDRNFNTTFFDPSGGGDPILYQH</sequence>
<keyword id="KW-0106">Calcium</keyword>
<keyword id="KW-0186">Copper</keyword>
<keyword id="KW-0249">Electron transport</keyword>
<keyword id="KW-0349">Heme</keyword>
<keyword id="KW-0408">Iron</keyword>
<keyword id="KW-0472">Membrane</keyword>
<keyword id="KW-0479">Metal-binding</keyword>
<keyword id="KW-0496">Mitochondrion</keyword>
<keyword id="KW-0999">Mitochondrion inner membrane</keyword>
<keyword id="KW-0679">Respiratory chain</keyword>
<keyword id="KW-1278">Translocase</keyword>
<keyword id="KW-0812">Transmembrane</keyword>
<keyword id="KW-1133">Transmembrane helix</keyword>
<keyword id="KW-0813">Transport</keyword>
<organism>
    <name type="scientific">Loligo forbesii</name>
    <name type="common">Veined squid</name>
    <dbReference type="NCBI Taxonomy" id="6618"/>
    <lineage>
        <taxon>Eukaryota</taxon>
        <taxon>Metazoa</taxon>
        <taxon>Spiralia</taxon>
        <taxon>Lophotrochozoa</taxon>
        <taxon>Mollusca</taxon>
        <taxon>Cephalopoda</taxon>
        <taxon>Coleoidea</taxon>
        <taxon>Decapodiformes</taxon>
        <taxon>Myopsida</taxon>
        <taxon>Loliginidae</taxon>
        <taxon>Loligo</taxon>
    </lineage>
</organism>
<reference key="1">
    <citation type="journal article" date="2000" name="Mol. Phylogenet. Evol.">
        <title>Phylogeny and historical biogeography of the loliginid squids (Mollusca: Cephalopoda) based on mitochondrial DNA sequence data.</title>
        <authorList>
            <person name="Anderson F.E."/>
        </authorList>
    </citation>
    <scope>NUCLEOTIDE SEQUENCE [GENOMIC DNA]</scope>
</reference>
<comment type="function">
    <text evidence="1">Component of the cytochrome c oxidase, the last enzyme in the mitochondrial electron transport chain which drives oxidative phosphorylation. The respiratory chain contains 3 multisubunit complexes succinate dehydrogenase (complex II, CII), ubiquinol-cytochrome c oxidoreductase (cytochrome b-c1 complex, complex III, CIII) and cytochrome c oxidase (complex IV, CIV), that cooperate to transfer electrons derived from NADH and succinate to molecular oxygen, creating an electrochemical gradient over the inner membrane that drives transmembrane transport and the ATP synthase. Cytochrome c oxidase is the component of the respiratory chain that catalyzes the reduction of oxygen to water. Electrons originating from reduced cytochrome c in the intermembrane space (IMS) are transferred via the dinuclear copper A center (CU(A)) of subunit 2 and heme A of subunit 1 to the active site in subunit 1, a binuclear center (BNC) formed by heme A3 and copper B (CU(B)). The BNC reduces molecular oxygen to 2 water molecules using 4 electrons from cytochrome c in the IMS and 4 protons from the mitochondrial matrix.</text>
</comment>
<comment type="catalytic activity">
    <reaction evidence="1">
        <text>4 Fe(II)-[cytochrome c] + O2 + 8 H(+)(in) = 4 Fe(III)-[cytochrome c] + 2 H2O + 4 H(+)(out)</text>
        <dbReference type="Rhea" id="RHEA:11436"/>
        <dbReference type="Rhea" id="RHEA-COMP:10350"/>
        <dbReference type="Rhea" id="RHEA-COMP:14399"/>
        <dbReference type="ChEBI" id="CHEBI:15377"/>
        <dbReference type="ChEBI" id="CHEBI:15378"/>
        <dbReference type="ChEBI" id="CHEBI:15379"/>
        <dbReference type="ChEBI" id="CHEBI:29033"/>
        <dbReference type="ChEBI" id="CHEBI:29034"/>
        <dbReference type="EC" id="7.1.1.9"/>
    </reaction>
    <physiologicalReaction direction="left-to-right" evidence="1">
        <dbReference type="Rhea" id="RHEA:11437"/>
    </physiologicalReaction>
</comment>
<comment type="cofactor">
    <cofactor evidence="1">
        <name>heme</name>
        <dbReference type="ChEBI" id="CHEBI:30413"/>
    </cofactor>
    <text evidence="1">Binds 2 heme A groups non-covalently per subunit.</text>
</comment>
<comment type="cofactor">
    <cofactor evidence="1">
        <name>Cu cation</name>
        <dbReference type="ChEBI" id="CHEBI:23378"/>
    </cofactor>
    <text evidence="1">Binds a copper B center.</text>
</comment>
<comment type="pathway">
    <text evidence="1">Energy metabolism; oxidative phosphorylation.</text>
</comment>
<comment type="subunit">
    <text evidence="1">Component of the cytochrome c oxidase (complex IV, CIV), a multisubunit enzyme composed of a catalytic core of 3 subunits and several supernumerary subunits. The complex exists as a monomer or a dimer and forms supercomplexes (SCs) in the inner mitochondrial membrane with ubiquinol-cytochrome c oxidoreductase (cytochrome b-c1 complex, complex III, CIII).</text>
</comment>
<comment type="subcellular location">
    <subcellularLocation>
        <location evidence="1">Mitochondrion inner membrane</location>
        <topology evidence="1">Multi-pass membrane protein</topology>
    </subcellularLocation>
</comment>
<comment type="similarity">
    <text evidence="3">Belongs to the heme-copper respiratory oxidase family.</text>
</comment>
<evidence type="ECO:0000250" key="1">
    <source>
        <dbReference type="UniProtKB" id="P00401"/>
    </source>
</evidence>
<evidence type="ECO:0000255" key="2"/>
<evidence type="ECO:0000305" key="3"/>
<proteinExistence type="inferred from homology"/>
<feature type="chain" id="PRO_0000183355" description="Cytochrome c oxidase subunit 1">
    <location>
        <begin position="1" status="less than"/>
        <end position="213" status="greater than"/>
    </location>
</feature>
<feature type="transmembrane region" description="Helical; Name=1" evidence="2">
    <location>
        <begin position="1"/>
        <end position="21"/>
    </location>
</feature>
<feature type="topological domain" description="Mitochondrial intermembrane" evidence="2">
    <location>
        <begin position="22"/>
        <end position="42"/>
    </location>
</feature>
<feature type="transmembrane region" description="Helical; Name=2" evidence="2">
    <location>
        <begin position="43"/>
        <end position="63"/>
    </location>
</feature>
<feature type="topological domain" description="Mitochondrial matrix" evidence="2">
    <location>
        <begin position="64"/>
        <end position="81"/>
    </location>
</feature>
<feature type="transmembrane region" description="Helical; Name=3" evidence="2">
    <location>
        <begin position="82"/>
        <end position="102"/>
    </location>
</feature>
<feature type="topological domain" description="Mitochondrial intermembrane" evidence="2">
    <location>
        <begin position="103"/>
        <end position="124"/>
    </location>
</feature>
<feature type="transmembrane region" description="Helical; Name=4" evidence="2">
    <location>
        <begin position="125"/>
        <end position="145"/>
    </location>
</feature>
<feature type="topological domain" description="Mitochondrial matrix" evidence="2">
    <location>
        <begin position="146"/>
        <end position="162"/>
    </location>
</feature>
<feature type="transmembrane region" description="Helical; Name=5" evidence="2">
    <location>
        <begin position="163"/>
        <end position="183"/>
    </location>
</feature>
<feature type="topological domain" description="Mitochondrial intermembrane" evidence="2">
    <location>
        <begin position="184"/>
        <end position="213"/>
    </location>
</feature>
<feature type="binding site" evidence="1">
    <location>
        <position position="20"/>
    </location>
    <ligand>
        <name>Ca(2+)</name>
        <dbReference type="ChEBI" id="CHEBI:29108"/>
    </ligand>
</feature>
<feature type="binding site" evidence="1">
    <location>
        <position position="25"/>
    </location>
    <ligand>
        <name>Ca(2+)</name>
        <dbReference type="ChEBI" id="CHEBI:29108"/>
    </ligand>
</feature>
<feature type="binding site" description="axial binding residue" evidence="1">
    <location>
        <position position="41"/>
    </location>
    <ligand>
        <name>Fe(II)-heme a</name>
        <dbReference type="ChEBI" id="CHEBI:61715"/>
        <note>low-spin</note>
    </ligand>
    <ligandPart>
        <name>Fe</name>
        <dbReference type="ChEBI" id="CHEBI:18248"/>
    </ligandPart>
</feature>
<feature type="non-terminal residue">
    <location>
        <position position="1"/>
    </location>
</feature>
<feature type="non-terminal residue">
    <location>
        <position position="213"/>
    </location>
</feature>
<geneLocation type="mitochondrion"/>
<name>COX1_LOLFO</name>